<keyword id="KW-0002">3D-structure</keyword>
<keyword id="KW-0106">Calcium</keyword>
<keyword id="KW-0903">Direct protein sequencing</keyword>
<keyword id="KW-0430">Lectin</keyword>
<keyword id="KW-0464">Manganese</keyword>
<keyword id="KW-0465">Mannose-binding</keyword>
<keyword id="KW-0479">Metal-binding</keyword>
<keyword id="KW-0732">Signal</keyword>
<reference key="1">
    <citation type="journal article" date="2016" name="J. Drug Des. Res.">
        <title>Structural characterization, docking and dynamics simulations of Canavalia bonariensis lectin.</title>
        <authorList>
            <person name="da Silva M.T.L."/>
            <person name="da Silva Osterne V.J."/>
            <person name="Simplicio Nobre C.A."/>
            <person name="Chaves R.P."/>
            <person name="da Silva I.B."/>
            <person name="Moreira C.G."/>
            <person name="de Andrade M.L.L."/>
            <person name="Nagano C.S."/>
            <person name="Rocha C.R.C."/>
            <person name="Leal R.B."/>
            <person name="Martins J.L."/>
            <person name="Cavada B.S."/>
            <person name="do Nascimento K.S."/>
        </authorList>
    </citation>
    <scope>NUCLEOTIDE SEQUENCE [GENOMIC DNA] OF 1-251</scope>
    <scope>PROTEIN SEQUENCE OF 50-83; 102-110; 124-139; 164-193; 210-222 AND 238-281</scope>
    <scope>PTM</scope>
    <scope>IDENTIFICATION BY MASS SPECTROMETRY</scope>
    <source>
        <tissue evidence="8">Seed</tissue>
    </source>
</reference>
<reference key="2">
    <citation type="journal article" date="1999" name="Biochim. Biophys. Acta">
        <title>Molecular characterization and crystallization of Diocleinae lectins.</title>
        <authorList>
            <person name="Calvete J.J."/>
            <person name="Thole H.H."/>
            <person name="Raida M."/>
            <person name="Urbanke C."/>
            <person name="Romero A."/>
            <person name="Grangeiro T.B."/>
            <person name="Ramos M.V."/>
            <person name="Almeida da Rocha I.M."/>
            <person name="Guimaraes F.N."/>
            <person name="Cavada B.S."/>
        </authorList>
    </citation>
    <scope>PROTEIN SEQUENCE OF 30-51 AND 164-188</scope>
    <scope>SUBUNIT</scope>
    <source>
        <tissue evidence="7">Seed</tissue>
    </source>
</reference>
<name>LECA_CANBN</name>
<comment type="function">
    <text evidence="8">D-mannose-specific lectin.</text>
</comment>
<comment type="subunit">
    <text evidence="5">Equilibrium between homodimer and homotetramer.</text>
</comment>
<comment type="PTM">
    <text evidence="6">The mature chain consists of residues 164-281 followed by residues 30-148. Concanavalin A-like lectins of the Diocleinae subtribe undergo proteolytic processing referred to as circular permutation. The propeptide is split into an N-terminal and a C-terminal part, the gamma and beta chain, respectively. These are then religated in beta-gamma order to form the mature alpha chain. The beta and gamma chains can often be detected in cell extracts.</text>
</comment>
<comment type="miscellaneous">
    <text evidence="2">Binds one manganese (or another transition metal) ion and one calcium ion. The metal ions are essential for the saccharide-binding and cell-agglutinating activities.</text>
</comment>
<comment type="miscellaneous">
    <text evidence="5">Several isolectin forms may exist.</text>
</comment>
<comment type="similarity">
    <text evidence="9">Belongs to the leguminous lectin family.</text>
</comment>
<protein>
    <recommendedName>
        <fullName evidence="8">Lectin CaBo</fullName>
    </recommendedName>
    <alternativeName>
        <fullName evidence="7">Lectin Cbo</fullName>
    </alternativeName>
</protein>
<dbReference type="PDB" id="5U3E">
    <property type="method" value="X-ray"/>
    <property type="resolution" value="2.30 A"/>
    <property type="chains" value="A=1-148"/>
</dbReference>
<dbReference type="PDBsum" id="5U3E"/>
<dbReference type="SMR" id="P58906"/>
<dbReference type="UniLectin" id="P58906"/>
<dbReference type="GO" id="GO:0030246">
    <property type="term" value="F:carbohydrate binding"/>
    <property type="evidence" value="ECO:0000314"/>
    <property type="project" value="UniProtKB"/>
</dbReference>
<dbReference type="GO" id="GO:0005537">
    <property type="term" value="F:D-mannose binding"/>
    <property type="evidence" value="ECO:0007669"/>
    <property type="project" value="UniProtKB-KW"/>
</dbReference>
<dbReference type="GO" id="GO:0046872">
    <property type="term" value="F:metal ion binding"/>
    <property type="evidence" value="ECO:0007669"/>
    <property type="project" value="UniProtKB-KW"/>
</dbReference>
<dbReference type="CDD" id="cd06899">
    <property type="entry name" value="lectin_legume_LecRK_Arcelin_ConA"/>
    <property type="match status" value="1"/>
</dbReference>
<dbReference type="FunFam" id="2.60.120.200:FF:000237">
    <property type="entry name" value="Mannose/glucose-specific lectin"/>
    <property type="match status" value="1"/>
</dbReference>
<dbReference type="Gene3D" id="2.60.120.200">
    <property type="match status" value="1"/>
</dbReference>
<dbReference type="InterPro" id="IPR013320">
    <property type="entry name" value="ConA-like_dom_sf"/>
</dbReference>
<dbReference type="InterPro" id="IPR016363">
    <property type="entry name" value="L-lectin"/>
</dbReference>
<dbReference type="InterPro" id="IPR000985">
    <property type="entry name" value="Lectin_LegA_CS"/>
</dbReference>
<dbReference type="InterPro" id="IPR019825">
    <property type="entry name" value="Lectin_legB_Mn/Ca_BS"/>
</dbReference>
<dbReference type="InterPro" id="IPR001220">
    <property type="entry name" value="Legume_lectin_dom"/>
</dbReference>
<dbReference type="InterPro" id="IPR050258">
    <property type="entry name" value="Leguminous_Lectin"/>
</dbReference>
<dbReference type="PANTHER" id="PTHR32401">
    <property type="entry name" value="CONCANAVALIN A-LIKE LECTIN FAMILY PROTEIN"/>
    <property type="match status" value="1"/>
</dbReference>
<dbReference type="PANTHER" id="PTHR32401:SF47">
    <property type="entry name" value="LEGUME LECTIN DOMAIN-CONTAINING PROTEIN"/>
    <property type="match status" value="1"/>
</dbReference>
<dbReference type="Pfam" id="PF00139">
    <property type="entry name" value="Lectin_legB"/>
    <property type="match status" value="1"/>
</dbReference>
<dbReference type="PIRSF" id="PIRSF002690">
    <property type="entry name" value="L-type_lectin_plant"/>
    <property type="match status" value="1"/>
</dbReference>
<dbReference type="SUPFAM" id="SSF49899">
    <property type="entry name" value="Concanavalin A-like lectins/glucanases"/>
    <property type="match status" value="1"/>
</dbReference>
<dbReference type="PROSITE" id="PS00308">
    <property type="entry name" value="LECTIN_LEGUME_ALPHA"/>
    <property type="match status" value="1"/>
</dbReference>
<dbReference type="PROSITE" id="PS00307">
    <property type="entry name" value="LECTIN_LEGUME_BETA"/>
    <property type="match status" value="1"/>
</dbReference>
<sequence length="281" mass="30440">MAISKKSSLYLPIFTFITMLLMVVNKVSSSTADANALHFTFNQFSKDQKDLILQGDATTGTDGNLELTRVSSNGSPQGNSVGRALFYAPVHIWESSAVVASFDATFKFLIKSPDSEPADGITFFIANIDSSIPSGSGGRLLGLFPDANIIKNSTTIDFNAAYNADTIVAVELDTYPNTDIGDPNYPHIGIDIKSIRSKKTTRWNIQNGKVGTAHINYNSVGKRLSAIVSYPNSDSATVSYDVDLDNVLPEWVRVGLSATTGLYKETNTILSWSFTSKLKSN</sequence>
<organism evidence="7">
    <name type="scientific">Canavalia bonariensis</name>
    <dbReference type="NCBI Taxonomy" id="192414"/>
    <lineage>
        <taxon>Eukaryota</taxon>
        <taxon>Viridiplantae</taxon>
        <taxon>Streptophyta</taxon>
        <taxon>Embryophyta</taxon>
        <taxon>Tracheophyta</taxon>
        <taxon>Spermatophyta</taxon>
        <taxon>Magnoliopsida</taxon>
        <taxon>eudicotyledons</taxon>
        <taxon>Gunneridae</taxon>
        <taxon>Pentapetalae</taxon>
        <taxon>rosids</taxon>
        <taxon>fabids</taxon>
        <taxon>Fabales</taxon>
        <taxon>Fabaceae</taxon>
        <taxon>Papilionoideae</taxon>
        <taxon>50 kb inversion clade</taxon>
        <taxon>NPAAA clade</taxon>
        <taxon>indigoferoid/millettioid clade</taxon>
        <taxon>Phaseoleae</taxon>
        <taxon>Canavalia</taxon>
    </lineage>
</organism>
<feature type="signal peptide" evidence="4">
    <location>
        <begin position="1"/>
        <end position="29"/>
    </location>
</feature>
<feature type="chain" id="PRO_0000017585" description="Lectin CaBo, 2nd part" evidence="10">
    <location>
        <begin position="30"/>
        <end position="148"/>
    </location>
</feature>
<feature type="propeptide" id="PRO_0000438365" description="Removed in mature form" evidence="6">
    <location>
        <begin position="149"/>
        <end position="163"/>
    </location>
</feature>
<feature type="chain" id="PRO_0000017587" description="Lectin CaBo, 1st part" evidence="10">
    <location>
        <begin position="164"/>
        <end position="281"/>
    </location>
</feature>
<feature type="binding site" evidence="1">
    <location>
        <position position="119"/>
    </location>
    <ligand>
        <name>Ca(2+)</name>
        <dbReference type="ChEBI" id="CHEBI:29108"/>
    </ligand>
</feature>
<feature type="binding site" evidence="3">
    <location>
        <position position="139"/>
    </location>
    <ligand>
        <name>a carbohydrate</name>
        <dbReference type="ChEBI" id="CHEBI:16646"/>
    </ligand>
</feature>
<feature type="binding site" evidence="3">
    <location>
        <position position="171"/>
    </location>
    <ligand>
        <name>Mn(2+)</name>
        <dbReference type="ChEBI" id="CHEBI:29035"/>
    </ligand>
</feature>
<feature type="binding site" evidence="3">
    <location>
        <position position="173"/>
    </location>
    <ligand>
        <name>Ca(2+)</name>
        <dbReference type="ChEBI" id="CHEBI:29108"/>
    </ligand>
</feature>
<feature type="binding site" evidence="3">
    <location>
        <position position="173"/>
    </location>
    <ligand>
        <name>Mn(2+)</name>
        <dbReference type="ChEBI" id="CHEBI:29035"/>
    </ligand>
</feature>
<feature type="binding site" evidence="3">
    <location>
        <position position="175"/>
    </location>
    <ligand>
        <name>a carbohydrate</name>
        <dbReference type="ChEBI" id="CHEBI:16646"/>
    </ligand>
</feature>
<feature type="binding site" evidence="3">
    <location>
        <position position="175"/>
    </location>
    <ligand>
        <name>Ca(2+)</name>
        <dbReference type="ChEBI" id="CHEBI:29108"/>
    </ligand>
</feature>
<feature type="binding site" evidence="3">
    <location>
        <position position="177"/>
    </location>
    <ligand>
        <name>Ca(2+)</name>
        <dbReference type="ChEBI" id="CHEBI:29108"/>
    </ligand>
</feature>
<feature type="binding site" evidence="3">
    <location>
        <position position="182"/>
    </location>
    <ligand>
        <name>Ca(2+)</name>
        <dbReference type="ChEBI" id="CHEBI:29108"/>
    </ligand>
</feature>
<feature type="binding site" evidence="3">
    <location>
        <position position="182"/>
    </location>
    <ligand>
        <name>Mn(2+)</name>
        <dbReference type="ChEBI" id="CHEBI:29035"/>
    </ligand>
</feature>
<feature type="binding site" evidence="3">
    <location>
        <position position="187"/>
    </location>
    <ligand>
        <name>Mn(2+)</name>
        <dbReference type="ChEBI" id="CHEBI:29035"/>
    </ligand>
</feature>
<feature type="binding site" evidence="3">
    <location>
        <begin position="262"/>
        <end position="263"/>
    </location>
    <ligand>
        <name>a carbohydrate</name>
        <dbReference type="ChEBI" id="CHEBI:16646"/>
    </ligand>
</feature>
<feature type="site" description="Cleavage" evidence="6">
    <location>
        <begin position="148"/>
        <end position="149"/>
    </location>
</feature>
<feature type="site" description="Cleavage" evidence="6">
    <location>
        <begin position="163"/>
        <end position="164"/>
    </location>
</feature>
<feature type="sequence conflict" description="In Ref. 2; AA sequence." evidence="9" ref="2">
    <original>A</original>
    <variation>S</variation>
    <location>
        <position position="36"/>
    </location>
</feature>
<feature type="sequence conflict" description="In Ref. 2; AA sequence." evidence="9" ref="2">
    <original>KDQ</original>
    <variation>QNP</variation>
    <location>
        <begin position="46"/>
        <end position="48"/>
    </location>
</feature>
<feature type="non-terminal residue" evidence="9">
    <location>
        <position position="281"/>
    </location>
</feature>
<feature type="strand" evidence="11">
    <location>
        <begin position="1"/>
        <end position="6"/>
    </location>
</feature>
<feature type="strand" evidence="11">
    <location>
        <begin position="15"/>
        <end position="25"/>
    </location>
</feature>
<feature type="strand" evidence="11">
    <location>
        <begin position="35"/>
        <end position="43"/>
    </location>
</feature>
<feature type="strand" evidence="11">
    <location>
        <begin position="51"/>
        <end position="55"/>
    </location>
</feature>
<feature type="helix" evidence="11">
    <location>
        <begin position="61"/>
        <end position="63"/>
    </location>
</feature>
<feature type="strand" evidence="11">
    <location>
        <begin position="81"/>
        <end position="88"/>
    </location>
</feature>
<feature type="strand" evidence="11">
    <location>
        <begin position="100"/>
        <end position="109"/>
    </location>
</feature>
<feature type="strand" evidence="11">
    <location>
        <begin position="113"/>
        <end position="115"/>
    </location>
</feature>
<feature type="strand" evidence="11">
    <location>
        <begin position="119"/>
        <end position="127"/>
    </location>
</feature>
<feature type="helix" evidence="11">
    <location>
        <begin position="138"/>
        <end position="140"/>
    </location>
</feature>
<feature type="turn" evidence="11">
    <location>
        <begin position="141"/>
        <end position="143"/>
    </location>
</feature>
<accession>P58906</accession>
<evidence type="ECO:0000250" key="1"/>
<evidence type="ECO:0000250" key="2">
    <source>
        <dbReference type="UniProtKB" id="P14894"/>
    </source>
</evidence>
<evidence type="ECO:0000250" key="3">
    <source>
        <dbReference type="UniProtKB" id="P86624"/>
    </source>
</evidence>
<evidence type="ECO:0000255" key="4"/>
<evidence type="ECO:0000269" key="5">
    <source>
    </source>
</evidence>
<evidence type="ECO:0000269" key="6">
    <source ref="1"/>
</evidence>
<evidence type="ECO:0000303" key="7">
    <source>
    </source>
</evidence>
<evidence type="ECO:0000303" key="8">
    <source ref="1"/>
</evidence>
<evidence type="ECO:0000305" key="9"/>
<evidence type="ECO:0000305" key="10">
    <source ref="1"/>
</evidence>
<evidence type="ECO:0007829" key="11">
    <source>
        <dbReference type="PDB" id="5U3E"/>
    </source>
</evidence>
<proteinExistence type="evidence at protein level"/>